<evidence type="ECO:0000255" key="1">
    <source>
        <dbReference type="HAMAP-Rule" id="MF_00168"/>
    </source>
</evidence>
<organism>
    <name type="scientific">Salmonella paratyphi B (strain ATCC BAA-1250 / SPB7)</name>
    <dbReference type="NCBI Taxonomy" id="1016998"/>
    <lineage>
        <taxon>Bacteria</taxon>
        <taxon>Pseudomonadati</taxon>
        <taxon>Pseudomonadota</taxon>
        <taxon>Gammaproteobacteria</taxon>
        <taxon>Enterobacterales</taxon>
        <taxon>Enterobacteriaceae</taxon>
        <taxon>Salmonella</taxon>
    </lineage>
</organism>
<name>TGT_SALPB</name>
<sequence length="375" mass="42522">MKFELDTTDGRARRGRLVFDRGVVETPAFMPVGTYGTVKGMTPEEVEATGAQIILGNTFHLWLRPGQEIMKLHGDLHDFMQWKGPILTDSGGFQVFSLGDIRKITEQGVHFRNPINGDPIFLDPEKSMEIQYDLGSDIVMIFDECTPYPADWDYAKRSMEMSLRWAKRSRDRFDSLGNKNALFGIIQGSVYEDLRDISVKGLVEIGFDGYAVGGLAVGEPKADMHRILEHVCPQIPADKPRYLMGVGKPEDLVEGVRRGIDMFDCVMPTRNARNGHLFVTDGVVKIRNAKHKSDTSPLDAECDCYTCRNYSRAYLHHLDRCNEILGARLNTIHNLRYYQRLMAGLRKAIEEGKLESFVTEFYQRQGRPVPPLNVD</sequence>
<reference key="1">
    <citation type="submission" date="2007-11" db="EMBL/GenBank/DDBJ databases">
        <authorList>
            <consortium name="The Salmonella enterica serovar Paratyphi B Genome Sequencing Project"/>
            <person name="McClelland M."/>
            <person name="Sanderson E.K."/>
            <person name="Porwollik S."/>
            <person name="Spieth J."/>
            <person name="Clifton W.S."/>
            <person name="Fulton R."/>
            <person name="Cordes M."/>
            <person name="Wollam A."/>
            <person name="Shah N."/>
            <person name="Pepin K."/>
            <person name="Bhonagiri V."/>
            <person name="Nash W."/>
            <person name="Johnson M."/>
            <person name="Thiruvilangam P."/>
            <person name="Wilson R."/>
        </authorList>
    </citation>
    <scope>NUCLEOTIDE SEQUENCE [LARGE SCALE GENOMIC DNA]</scope>
    <source>
        <strain>ATCC BAA-1250 / SPB7</strain>
    </source>
</reference>
<keyword id="KW-0328">Glycosyltransferase</keyword>
<keyword id="KW-0479">Metal-binding</keyword>
<keyword id="KW-0671">Queuosine biosynthesis</keyword>
<keyword id="KW-0808">Transferase</keyword>
<keyword id="KW-0819">tRNA processing</keyword>
<keyword id="KW-0862">Zinc</keyword>
<comment type="function">
    <text evidence="1">Catalyzes the base-exchange of a guanine (G) residue with the queuine precursor 7-aminomethyl-7-deazaguanine (PreQ1) at position 34 (anticodon wobble position) in tRNAs with GU(N) anticodons (tRNA-Asp, -Asn, -His and -Tyr). Catalysis occurs through a double-displacement mechanism. The nucleophile active site attacks the C1' of nucleotide 34 to detach the guanine base from the RNA, forming a covalent enzyme-RNA intermediate. The proton acceptor active site deprotonates the incoming PreQ1, allowing a nucleophilic attack on the C1' of the ribose to form the product. After dissociation, two additional enzymatic reactions on the tRNA convert PreQ1 to queuine (Q), resulting in the hypermodified nucleoside queuosine (7-(((4,5-cis-dihydroxy-2-cyclopenten-1-yl)amino)methyl)-7-deazaguanosine).</text>
</comment>
<comment type="catalytic activity">
    <reaction evidence="1">
        <text>7-aminomethyl-7-carbaguanine + guanosine(34) in tRNA = 7-aminomethyl-7-carbaguanosine(34) in tRNA + guanine</text>
        <dbReference type="Rhea" id="RHEA:24104"/>
        <dbReference type="Rhea" id="RHEA-COMP:10341"/>
        <dbReference type="Rhea" id="RHEA-COMP:10342"/>
        <dbReference type="ChEBI" id="CHEBI:16235"/>
        <dbReference type="ChEBI" id="CHEBI:58703"/>
        <dbReference type="ChEBI" id="CHEBI:74269"/>
        <dbReference type="ChEBI" id="CHEBI:82833"/>
        <dbReference type="EC" id="2.4.2.29"/>
    </reaction>
</comment>
<comment type="cofactor">
    <cofactor evidence="1">
        <name>Zn(2+)</name>
        <dbReference type="ChEBI" id="CHEBI:29105"/>
    </cofactor>
    <text evidence="1">Binds 1 zinc ion per subunit.</text>
</comment>
<comment type="pathway">
    <text evidence="1">tRNA modification; tRNA-queuosine biosynthesis.</text>
</comment>
<comment type="subunit">
    <text evidence="1">Homodimer. Within each dimer, one monomer is responsible for RNA recognition and catalysis, while the other monomer binds to the replacement base PreQ1.</text>
</comment>
<comment type="similarity">
    <text evidence="1">Belongs to the queuine tRNA-ribosyltransferase family.</text>
</comment>
<protein>
    <recommendedName>
        <fullName evidence="1">Queuine tRNA-ribosyltransferase</fullName>
        <ecNumber evidence="1">2.4.2.29</ecNumber>
    </recommendedName>
    <alternativeName>
        <fullName evidence="1">Guanine insertion enzyme</fullName>
    </alternativeName>
    <alternativeName>
        <fullName evidence="1">tRNA-guanine transglycosylase</fullName>
    </alternativeName>
</protein>
<accession>A9MX29</accession>
<feature type="chain" id="PRO_1000077016" description="Queuine tRNA-ribosyltransferase">
    <location>
        <begin position="1"/>
        <end position="375"/>
    </location>
</feature>
<feature type="region of interest" description="RNA binding" evidence="1">
    <location>
        <begin position="245"/>
        <end position="251"/>
    </location>
</feature>
<feature type="region of interest" description="RNA binding; important for wobble base 34 recognition" evidence="1">
    <location>
        <begin position="269"/>
        <end position="273"/>
    </location>
</feature>
<feature type="active site" description="Proton acceptor" evidence="1">
    <location>
        <position position="89"/>
    </location>
</feature>
<feature type="active site" description="Nucleophile" evidence="1">
    <location>
        <position position="264"/>
    </location>
</feature>
<feature type="binding site" evidence="1">
    <location>
        <begin position="89"/>
        <end position="93"/>
    </location>
    <ligand>
        <name>substrate</name>
    </ligand>
</feature>
<feature type="binding site" evidence="1">
    <location>
        <position position="143"/>
    </location>
    <ligand>
        <name>substrate</name>
    </ligand>
</feature>
<feature type="binding site" evidence="1">
    <location>
        <position position="187"/>
    </location>
    <ligand>
        <name>substrate</name>
    </ligand>
</feature>
<feature type="binding site" evidence="1">
    <location>
        <position position="214"/>
    </location>
    <ligand>
        <name>substrate</name>
    </ligand>
</feature>
<feature type="binding site" evidence="1">
    <location>
        <position position="302"/>
    </location>
    <ligand>
        <name>Zn(2+)</name>
        <dbReference type="ChEBI" id="CHEBI:29105"/>
    </ligand>
</feature>
<feature type="binding site" evidence="1">
    <location>
        <position position="304"/>
    </location>
    <ligand>
        <name>Zn(2+)</name>
        <dbReference type="ChEBI" id="CHEBI:29105"/>
    </ligand>
</feature>
<feature type="binding site" evidence="1">
    <location>
        <position position="307"/>
    </location>
    <ligand>
        <name>Zn(2+)</name>
        <dbReference type="ChEBI" id="CHEBI:29105"/>
    </ligand>
</feature>
<feature type="binding site" evidence="1">
    <location>
        <position position="333"/>
    </location>
    <ligand>
        <name>Zn(2+)</name>
        <dbReference type="ChEBI" id="CHEBI:29105"/>
    </ligand>
</feature>
<dbReference type="EC" id="2.4.2.29" evidence="1"/>
<dbReference type="EMBL" id="CP000886">
    <property type="protein sequence ID" value="ABX68542.1"/>
    <property type="molecule type" value="Genomic_DNA"/>
</dbReference>
<dbReference type="RefSeq" id="WP_000667305.1">
    <property type="nucleotide sequence ID" value="NC_010102.1"/>
</dbReference>
<dbReference type="SMR" id="A9MX29"/>
<dbReference type="KEGG" id="spq:SPAB_03181"/>
<dbReference type="PATRIC" id="fig|1016998.12.peg.3002"/>
<dbReference type="HOGENOM" id="CLU_022060_0_1_6"/>
<dbReference type="BioCyc" id="SENT1016998:SPAB_RS12995-MONOMER"/>
<dbReference type="UniPathway" id="UPA00392"/>
<dbReference type="Proteomes" id="UP000008556">
    <property type="component" value="Chromosome"/>
</dbReference>
<dbReference type="GO" id="GO:0005829">
    <property type="term" value="C:cytosol"/>
    <property type="evidence" value="ECO:0007669"/>
    <property type="project" value="TreeGrafter"/>
</dbReference>
<dbReference type="GO" id="GO:0046872">
    <property type="term" value="F:metal ion binding"/>
    <property type="evidence" value="ECO:0007669"/>
    <property type="project" value="UniProtKB-KW"/>
</dbReference>
<dbReference type="GO" id="GO:0008479">
    <property type="term" value="F:tRNA-guanosine(34) queuine transglycosylase activity"/>
    <property type="evidence" value="ECO:0007669"/>
    <property type="project" value="UniProtKB-UniRule"/>
</dbReference>
<dbReference type="GO" id="GO:0008616">
    <property type="term" value="P:queuosine biosynthetic process"/>
    <property type="evidence" value="ECO:0007669"/>
    <property type="project" value="UniProtKB-UniRule"/>
</dbReference>
<dbReference type="GO" id="GO:0002099">
    <property type="term" value="P:tRNA wobble guanine modification"/>
    <property type="evidence" value="ECO:0007669"/>
    <property type="project" value="TreeGrafter"/>
</dbReference>
<dbReference type="GO" id="GO:0101030">
    <property type="term" value="P:tRNA-guanine transglycosylation"/>
    <property type="evidence" value="ECO:0007669"/>
    <property type="project" value="InterPro"/>
</dbReference>
<dbReference type="FunFam" id="3.20.20.105:FF:000001">
    <property type="entry name" value="Queuine tRNA-ribosyltransferase"/>
    <property type="match status" value="1"/>
</dbReference>
<dbReference type="Gene3D" id="3.20.20.105">
    <property type="entry name" value="Queuine tRNA-ribosyltransferase-like"/>
    <property type="match status" value="1"/>
</dbReference>
<dbReference type="HAMAP" id="MF_00168">
    <property type="entry name" value="Q_tRNA_Tgt"/>
    <property type="match status" value="1"/>
</dbReference>
<dbReference type="InterPro" id="IPR050076">
    <property type="entry name" value="ArchSynthase1/Queuine_TRR"/>
</dbReference>
<dbReference type="InterPro" id="IPR004803">
    <property type="entry name" value="TGT"/>
</dbReference>
<dbReference type="InterPro" id="IPR036511">
    <property type="entry name" value="TGT-like_sf"/>
</dbReference>
<dbReference type="InterPro" id="IPR002616">
    <property type="entry name" value="tRNA_ribo_trans-like"/>
</dbReference>
<dbReference type="NCBIfam" id="TIGR00430">
    <property type="entry name" value="Q_tRNA_tgt"/>
    <property type="match status" value="1"/>
</dbReference>
<dbReference type="NCBIfam" id="TIGR00449">
    <property type="entry name" value="tgt_general"/>
    <property type="match status" value="1"/>
</dbReference>
<dbReference type="PANTHER" id="PTHR46499">
    <property type="entry name" value="QUEUINE TRNA-RIBOSYLTRANSFERASE"/>
    <property type="match status" value="1"/>
</dbReference>
<dbReference type="PANTHER" id="PTHR46499:SF1">
    <property type="entry name" value="QUEUINE TRNA-RIBOSYLTRANSFERASE"/>
    <property type="match status" value="1"/>
</dbReference>
<dbReference type="Pfam" id="PF01702">
    <property type="entry name" value="TGT"/>
    <property type="match status" value="1"/>
</dbReference>
<dbReference type="SUPFAM" id="SSF51713">
    <property type="entry name" value="tRNA-guanine transglycosylase"/>
    <property type="match status" value="1"/>
</dbReference>
<proteinExistence type="inferred from homology"/>
<gene>
    <name evidence="1" type="primary">tgt</name>
    <name type="ordered locus">SPAB_03181</name>
</gene>